<name>RL35_ALIFM</name>
<dbReference type="EMBL" id="CP001139">
    <property type="protein sequence ID" value="ACH65760.1"/>
    <property type="molecule type" value="Genomic_DNA"/>
</dbReference>
<dbReference type="RefSeq" id="WP_005419080.1">
    <property type="nucleotide sequence ID" value="NC_011184.1"/>
</dbReference>
<dbReference type="SMR" id="B5FDV3"/>
<dbReference type="GeneID" id="56274958"/>
<dbReference type="KEGG" id="vfm:VFMJ11_1297"/>
<dbReference type="HOGENOM" id="CLU_169643_4_3_6"/>
<dbReference type="Proteomes" id="UP000001857">
    <property type="component" value="Chromosome I"/>
</dbReference>
<dbReference type="GO" id="GO:0022625">
    <property type="term" value="C:cytosolic large ribosomal subunit"/>
    <property type="evidence" value="ECO:0007669"/>
    <property type="project" value="TreeGrafter"/>
</dbReference>
<dbReference type="GO" id="GO:0003735">
    <property type="term" value="F:structural constituent of ribosome"/>
    <property type="evidence" value="ECO:0007669"/>
    <property type="project" value="InterPro"/>
</dbReference>
<dbReference type="GO" id="GO:0006412">
    <property type="term" value="P:translation"/>
    <property type="evidence" value="ECO:0007669"/>
    <property type="project" value="UniProtKB-UniRule"/>
</dbReference>
<dbReference type="FunFam" id="4.10.410.60:FF:000001">
    <property type="entry name" value="50S ribosomal protein L35"/>
    <property type="match status" value="1"/>
</dbReference>
<dbReference type="Gene3D" id="4.10.410.60">
    <property type="match status" value="1"/>
</dbReference>
<dbReference type="HAMAP" id="MF_00514">
    <property type="entry name" value="Ribosomal_bL35"/>
    <property type="match status" value="1"/>
</dbReference>
<dbReference type="InterPro" id="IPR001706">
    <property type="entry name" value="Ribosomal_bL35"/>
</dbReference>
<dbReference type="InterPro" id="IPR021137">
    <property type="entry name" value="Ribosomal_bL35-like"/>
</dbReference>
<dbReference type="InterPro" id="IPR018265">
    <property type="entry name" value="Ribosomal_bL35_CS"/>
</dbReference>
<dbReference type="InterPro" id="IPR037229">
    <property type="entry name" value="Ribosomal_bL35_sf"/>
</dbReference>
<dbReference type="NCBIfam" id="TIGR00001">
    <property type="entry name" value="rpmI_bact"/>
    <property type="match status" value="1"/>
</dbReference>
<dbReference type="PANTHER" id="PTHR33343">
    <property type="entry name" value="54S RIBOSOMAL PROTEIN BL35M"/>
    <property type="match status" value="1"/>
</dbReference>
<dbReference type="PANTHER" id="PTHR33343:SF1">
    <property type="entry name" value="LARGE RIBOSOMAL SUBUNIT PROTEIN BL35M"/>
    <property type="match status" value="1"/>
</dbReference>
<dbReference type="Pfam" id="PF01632">
    <property type="entry name" value="Ribosomal_L35p"/>
    <property type="match status" value="1"/>
</dbReference>
<dbReference type="PRINTS" id="PR00064">
    <property type="entry name" value="RIBOSOMALL35"/>
</dbReference>
<dbReference type="SUPFAM" id="SSF143034">
    <property type="entry name" value="L35p-like"/>
    <property type="match status" value="1"/>
</dbReference>
<dbReference type="PROSITE" id="PS00936">
    <property type="entry name" value="RIBOSOMAL_L35"/>
    <property type="match status" value="1"/>
</dbReference>
<evidence type="ECO:0000255" key="1">
    <source>
        <dbReference type="HAMAP-Rule" id="MF_00514"/>
    </source>
</evidence>
<evidence type="ECO:0000305" key="2"/>
<gene>
    <name evidence="1" type="primary">rpmI</name>
    <name type="ordered locus">VFMJ11_1297</name>
</gene>
<feature type="chain" id="PRO_1000127425" description="Large ribosomal subunit protein bL35">
    <location>
        <begin position="1"/>
        <end position="64"/>
    </location>
</feature>
<proteinExistence type="inferred from homology"/>
<sequence>MPKMKSNKGASKRFKKTAGGIKFKHATKRHILTKRTTKNKRQLRPNSLLPKCEVAAVARMLPYA</sequence>
<reference key="1">
    <citation type="submission" date="2008-08" db="EMBL/GenBank/DDBJ databases">
        <title>Complete sequence of Vibrio fischeri strain MJ11.</title>
        <authorList>
            <person name="Mandel M.J."/>
            <person name="Stabb E.V."/>
            <person name="Ruby E.G."/>
            <person name="Ferriera S."/>
            <person name="Johnson J."/>
            <person name="Kravitz S."/>
            <person name="Beeson K."/>
            <person name="Sutton G."/>
            <person name="Rogers Y.-H."/>
            <person name="Friedman R."/>
            <person name="Frazier M."/>
            <person name="Venter J.C."/>
        </authorList>
    </citation>
    <scope>NUCLEOTIDE SEQUENCE [LARGE SCALE GENOMIC DNA]</scope>
    <source>
        <strain>MJ11</strain>
    </source>
</reference>
<organism>
    <name type="scientific">Aliivibrio fischeri (strain MJ11)</name>
    <name type="common">Vibrio fischeri</name>
    <dbReference type="NCBI Taxonomy" id="388396"/>
    <lineage>
        <taxon>Bacteria</taxon>
        <taxon>Pseudomonadati</taxon>
        <taxon>Pseudomonadota</taxon>
        <taxon>Gammaproteobacteria</taxon>
        <taxon>Vibrionales</taxon>
        <taxon>Vibrionaceae</taxon>
        <taxon>Aliivibrio</taxon>
    </lineage>
</organism>
<accession>B5FDV3</accession>
<comment type="similarity">
    <text evidence="1">Belongs to the bacterial ribosomal protein bL35 family.</text>
</comment>
<keyword id="KW-0687">Ribonucleoprotein</keyword>
<keyword id="KW-0689">Ribosomal protein</keyword>
<protein>
    <recommendedName>
        <fullName evidence="1">Large ribosomal subunit protein bL35</fullName>
    </recommendedName>
    <alternativeName>
        <fullName evidence="2">50S ribosomal protein L35</fullName>
    </alternativeName>
</protein>